<accession>Q1LZ94</accession>
<reference key="1">
    <citation type="submission" date="2006-05" db="EMBL/GenBank/DDBJ databases">
        <authorList>
            <consortium name="NIH - Mammalian Gene Collection (MGC) project"/>
        </authorList>
    </citation>
    <scope>NUCLEOTIDE SEQUENCE [LARGE SCALE MRNA]</scope>
    <source>
        <strain>Hereford</strain>
        <tissue>Ascending colon</tissue>
    </source>
</reference>
<sequence length="158" mass="18376">MSSAIERKSLDPSEEPVDEVLQMPPSLLTCGGCQQNIGDRYFLKAIDQYWHEDCLSCDLCGCRLGEVGRRLYYKLGRKLCRRDYLRLFGQDGLCASCDKRIRAYEMTMRVKDKVYHLECFKCAACQKHFCVGDRYLLINSDIVCEQDIYEWTKINGMI</sequence>
<gene>
    <name type="primary">LMO2</name>
    <name type="synonym">RBTN2</name>
</gene>
<protein>
    <recommendedName>
        <fullName>Rhombotin-2</fullName>
    </recommendedName>
    <alternativeName>
        <fullName>LIM domain only protein 2</fullName>
        <shortName>LMO-2</shortName>
    </alternativeName>
</protein>
<name>RBTN2_BOVIN</name>
<evidence type="ECO:0000250" key="1"/>
<evidence type="ECO:0000255" key="2">
    <source>
        <dbReference type="PROSITE-ProRule" id="PRU00125"/>
    </source>
</evidence>
<evidence type="ECO:0000305" key="3"/>
<comment type="function">
    <text>Acts with TAL1/SCL to regulate red blood cell development. Also acts with LDB1 to maintain erythroid precursors in an immature state.</text>
</comment>
<comment type="subunit">
    <text evidence="1">Interacts via its LIM domains with ELF2 and LDB1. Interacts with BEX2 and KDM5A. Also interacts with basic helix-loop-helix protein TAL1/SCL and can assemble in a complex with LMO2 and TAL1/SCL (By similarity).</text>
</comment>
<comment type="subcellular location">
    <subcellularLocation>
        <location evidence="3">Nucleus</location>
    </subcellularLocation>
</comment>
<comment type="domain">
    <text evidence="1">The second LIM zinc-binding domain interacts with KDM5A.</text>
</comment>
<dbReference type="EMBL" id="BC116134">
    <property type="protein sequence ID" value="AAI16135.1"/>
    <property type="molecule type" value="mRNA"/>
</dbReference>
<dbReference type="RefSeq" id="NP_001069820.1">
    <property type="nucleotide sequence ID" value="NM_001076352.1"/>
</dbReference>
<dbReference type="RefSeq" id="XP_005216448.1">
    <property type="nucleotide sequence ID" value="XM_005216391.5"/>
</dbReference>
<dbReference type="RefSeq" id="XP_059730947.1">
    <property type="nucleotide sequence ID" value="XM_059874964.1"/>
</dbReference>
<dbReference type="RefSeq" id="XP_059730948.1">
    <property type="nucleotide sequence ID" value="XM_059874965.1"/>
</dbReference>
<dbReference type="BMRB" id="Q1LZ94"/>
<dbReference type="SMR" id="Q1LZ94"/>
<dbReference type="FunCoup" id="Q1LZ94">
    <property type="interactions" value="59"/>
</dbReference>
<dbReference type="STRING" id="9913.ENSBTAP00000009126"/>
<dbReference type="PaxDb" id="9913-ENSBTAP00000009126"/>
<dbReference type="GeneID" id="614876"/>
<dbReference type="KEGG" id="bta:614876"/>
<dbReference type="CTD" id="4005"/>
<dbReference type="eggNOG" id="KOG0490">
    <property type="taxonomic scope" value="Eukaryota"/>
</dbReference>
<dbReference type="HOGENOM" id="CLU_001357_3_1_1"/>
<dbReference type="InParanoid" id="Q1LZ94"/>
<dbReference type="OrthoDB" id="6352355at2759"/>
<dbReference type="TreeFam" id="TF351071"/>
<dbReference type="Proteomes" id="UP000009136">
    <property type="component" value="Unplaced"/>
</dbReference>
<dbReference type="GO" id="GO:0005634">
    <property type="term" value="C:nucleus"/>
    <property type="evidence" value="ECO:0000318"/>
    <property type="project" value="GO_Central"/>
</dbReference>
<dbReference type="GO" id="GO:0140297">
    <property type="term" value="F:DNA-binding transcription factor binding"/>
    <property type="evidence" value="ECO:0000318"/>
    <property type="project" value="GO_Central"/>
</dbReference>
<dbReference type="GO" id="GO:0046872">
    <property type="term" value="F:metal ion binding"/>
    <property type="evidence" value="ECO:0007669"/>
    <property type="project" value="UniProtKB-KW"/>
</dbReference>
<dbReference type="GO" id="GO:0003713">
    <property type="term" value="F:transcription coactivator activity"/>
    <property type="evidence" value="ECO:0000318"/>
    <property type="project" value="GO_Central"/>
</dbReference>
<dbReference type="GO" id="GO:0045944">
    <property type="term" value="P:positive regulation of transcription by RNA polymerase II"/>
    <property type="evidence" value="ECO:0000318"/>
    <property type="project" value="GO_Central"/>
</dbReference>
<dbReference type="CDD" id="cd09384">
    <property type="entry name" value="LIM1_LMO2"/>
    <property type="match status" value="1"/>
</dbReference>
<dbReference type="CDD" id="cd09385">
    <property type="entry name" value="LIM2_LMO2"/>
    <property type="match status" value="1"/>
</dbReference>
<dbReference type="FunFam" id="2.10.110.10:FF:000059">
    <property type="entry name" value="LIM domain only 2"/>
    <property type="match status" value="1"/>
</dbReference>
<dbReference type="FunFam" id="2.10.110.10:FF:000016">
    <property type="entry name" value="LIM domain only 3"/>
    <property type="match status" value="1"/>
</dbReference>
<dbReference type="Gene3D" id="2.10.110.10">
    <property type="entry name" value="Cysteine Rich Protein"/>
    <property type="match status" value="2"/>
</dbReference>
<dbReference type="InterPro" id="IPR050945">
    <property type="entry name" value="LMO_RBTN_TF"/>
</dbReference>
<dbReference type="InterPro" id="IPR001781">
    <property type="entry name" value="Znf_LIM"/>
</dbReference>
<dbReference type="PANTHER" id="PTHR45787">
    <property type="entry name" value="LD11652P"/>
    <property type="match status" value="1"/>
</dbReference>
<dbReference type="PANTHER" id="PTHR45787:SF3">
    <property type="entry name" value="RHOMBOTIN-2"/>
    <property type="match status" value="1"/>
</dbReference>
<dbReference type="Pfam" id="PF00412">
    <property type="entry name" value="LIM"/>
    <property type="match status" value="2"/>
</dbReference>
<dbReference type="SMART" id="SM00132">
    <property type="entry name" value="LIM"/>
    <property type="match status" value="2"/>
</dbReference>
<dbReference type="SUPFAM" id="SSF57716">
    <property type="entry name" value="Glucocorticoid receptor-like (DNA-binding domain)"/>
    <property type="match status" value="2"/>
</dbReference>
<dbReference type="PROSITE" id="PS00478">
    <property type="entry name" value="LIM_DOMAIN_1"/>
    <property type="match status" value="2"/>
</dbReference>
<dbReference type="PROSITE" id="PS50023">
    <property type="entry name" value="LIM_DOMAIN_2"/>
    <property type="match status" value="2"/>
</dbReference>
<organism>
    <name type="scientific">Bos taurus</name>
    <name type="common">Bovine</name>
    <dbReference type="NCBI Taxonomy" id="9913"/>
    <lineage>
        <taxon>Eukaryota</taxon>
        <taxon>Metazoa</taxon>
        <taxon>Chordata</taxon>
        <taxon>Craniata</taxon>
        <taxon>Vertebrata</taxon>
        <taxon>Euteleostomi</taxon>
        <taxon>Mammalia</taxon>
        <taxon>Eutheria</taxon>
        <taxon>Laurasiatheria</taxon>
        <taxon>Artiodactyla</taxon>
        <taxon>Ruminantia</taxon>
        <taxon>Pecora</taxon>
        <taxon>Bovidae</taxon>
        <taxon>Bovinae</taxon>
        <taxon>Bos</taxon>
    </lineage>
</organism>
<feature type="chain" id="PRO_0000269567" description="Rhombotin-2">
    <location>
        <begin position="1"/>
        <end position="158"/>
    </location>
</feature>
<feature type="domain" description="LIM zinc-binding 1" evidence="2">
    <location>
        <begin position="30"/>
        <end position="89"/>
    </location>
</feature>
<feature type="domain" description="LIM zinc-binding 2" evidence="2">
    <location>
        <begin position="94"/>
        <end position="153"/>
    </location>
</feature>
<keyword id="KW-0440">LIM domain</keyword>
<keyword id="KW-0479">Metal-binding</keyword>
<keyword id="KW-0539">Nucleus</keyword>
<keyword id="KW-1185">Reference proteome</keyword>
<keyword id="KW-0677">Repeat</keyword>
<keyword id="KW-0862">Zinc</keyword>
<proteinExistence type="evidence at transcript level"/>